<name>OBG_BORA1</name>
<gene>
    <name evidence="1" type="primary">obg</name>
    <name type="ordered locus">BAV0257</name>
</gene>
<accession>Q2L062</accession>
<feature type="chain" id="PRO_0000385748" description="GTPase Obg">
    <location>
        <begin position="1"/>
        <end position="372"/>
    </location>
</feature>
<feature type="domain" description="Obg" evidence="2">
    <location>
        <begin position="1"/>
        <end position="159"/>
    </location>
</feature>
<feature type="domain" description="OBG-type G" evidence="1">
    <location>
        <begin position="160"/>
        <end position="336"/>
    </location>
</feature>
<feature type="region of interest" description="Disordered" evidence="3">
    <location>
        <begin position="341"/>
        <end position="372"/>
    </location>
</feature>
<feature type="binding site" evidence="1">
    <location>
        <begin position="166"/>
        <end position="173"/>
    </location>
    <ligand>
        <name>GTP</name>
        <dbReference type="ChEBI" id="CHEBI:37565"/>
    </ligand>
</feature>
<feature type="binding site" evidence="1">
    <location>
        <position position="173"/>
    </location>
    <ligand>
        <name>Mg(2+)</name>
        <dbReference type="ChEBI" id="CHEBI:18420"/>
    </ligand>
</feature>
<feature type="binding site" evidence="1">
    <location>
        <begin position="191"/>
        <end position="195"/>
    </location>
    <ligand>
        <name>GTP</name>
        <dbReference type="ChEBI" id="CHEBI:37565"/>
    </ligand>
</feature>
<feature type="binding site" evidence="1">
    <location>
        <position position="193"/>
    </location>
    <ligand>
        <name>Mg(2+)</name>
        <dbReference type="ChEBI" id="CHEBI:18420"/>
    </ligand>
</feature>
<feature type="binding site" evidence="1">
    <location>
        <begin position="213"/>
        <end position="216"/>
    </location>
    <ligand>
        <name>GTP</name>
        <dbReference type="ChEBI" id="CHEBI:37565"/>
    </ligand>
</feature>
<feature type="binding site" evidence="1">
    <location>
        <begin position="288"/>
        <end position="291"/>
    </location>
    <ligand>
        <name>GTP</name>
        <dbReference type="ChEBI" id="CHEBI:37565"/>
    </ligand>
</feature>
<feature type="binding site" evidence="1">
    <location>
        <begin position="317"/>
        <end position="319"/>
    </location>
    <ligand>
        <name>GTP</name>
        <dbReference type="ChEBI" id="CHEBI:37565"/>
    </ligand>
</feature>
<dbReference type="EC" id="3.6.5.-" evidence="1"/>
<dbReference type="EMBL" id="AM167904">
    <property type="protein sequence ID" value="CAJ47862.1"/>
    <property type="molecule type" value="Genomic_DNA"/>
</dbReference>
<dbReference type="RefSeq" id="WP_012415960.1">
    <property type="nucleotide sequence ID" value="NC_010645.1"/>
</dbReference>
<dbReference type="SMR" id="Q2L062"/>
<dbReference type="STRING" id="360910.BAV0257"/>
<dbReference type="KEGG" id="bav:BAV0257"/>
<dbReference type="eggNOG" id="COG0536">
    <property type="taxonomic scope" value="Bacteria"/>
</dbReference>
<dbReference type="HOGENOM" id="CLU_011747_2_0_4"/>
<dbReference type="OrthoDB" id="9807318at2"/>
<dbReference type="Proteomes" id="UP000001977">
    <property type="component" value="Chromosome"/>
</dbReference>
<dbReference type="GO" id="GO:0005737">
    <property type="term" value="C:cytoplasm"/>
    <property type="evidence" value="ECO:0007669"/>
    <property type="project" value="UniProtKB-SubCell"/>
</dbReference>
<dbReference type="GO" id="GO:0005525">
    <property type="term" value="F:GTP binding"/>
    <property type="evidence" value="ECO:0007669"/>
    <property type="project" value="UniProtKB-UniRule"/>
</dbReference>
<dbReference type="GO" id="GO:0003924">
    <property type="term" value="F:GTPase activity"/>
    <property type="evidence" value="ECO:0007669"/>
    <property type="project" value="UniProtKB-UniRule"/>
</dbReference>
<dbReference type="GO" id="GO:0000287">
    <property type="term" value="F:magnesium ion binding"/>
    <property type="evidence" value="ECO:0007669"/>
    <property type="project" value="InterPro"/>
</dbReference>
<dbReference type="GO" id="GO:0042254">
    <property type="term" value="P:ribosome biogenesis"/>
    <property type="evidence" value="ECO:0007669"/>
    <property type="project" value="UniProtKB-UniRule"/>
</dbReference>
<dbReference type="CDD" id="cd01898">
    <property type="entry name" value="Obg"/>
    <property type="match status" value="1"/>
</dbReference>
<dbReference type="FunFam" id="2.70.210.12:FF:000001">
    <property type="entry name" value="GTPase Obg"/>
    <property type="match status" value="1"/>
</dbReference>
<dbReference type="Gene3D" id="2.70.210.12">
    <property type="entry name" value="GTP1/OBG domain"/>
    <property type="match status" value="1"/>
</dbReference>
<dbReference type="Gene3D" id="3.40.50.300">
    <property type="entry name" value="P-loop containing nucleotide triphosphate hydrolases"/>
    <property type="match status" value="1"/>
</dbReference>
<dbReference type="HAMAP" id="MF_01454">
    <property type="entry name" value="GTPase_Obg"/>
    <property type="match status" value="1"/>
</dbReference>
<dbReference type="InterPro" id="IPR031167">
    <property type="entry name" value="G_OBG"/>
</dbReference>
<dbReference type="InterPro" id="IPR006073">
    <property type="entry name" value="GTP-bd"/>
</dbReference>
<dbReference type="InterPro" id="IPR014100">
    <property type="entry name" value="GTP-bd_Obg/CgtA"/>
</dbReference>
<dbReference type="InterPro" id="IPR006074">
    <property type="entry name" value="GTP1-OBG_CS"/>
</dbReference>
<dbReference type="InterPro" id="IPR006169">
    <property type="entry name" value="GTP1_OBG_dom"/>
</dbReference>
<dbReference type="InterPro" id="IPR036726">
    <property type="entry name" value="GTP1_OBG_dom_sf"/>
</dbReference>
<dbReference type="InterPro" id="IPR045086">
    <property type="entry name" value="OBG_GTPase"/>
</dbReference>
<dbReference type="InterPro" id="IPR027417">
    <property type="entry name" value="P-loop_NTPase"/>
</dbReference>
<dbReference type="NCBIfam" id="TIGR02729">
    <property type="entry name" value="Obg_CgtA"/>
    <property type="match status" value="1"/>
</dbReference>
<dbReference type="NCBIfam" id="NF008955">
    <property type="entry name" value="PRK12297.1"/>
    <property type="match status" value="1"/>
</dbReference>
<dbReference type="NCBIfam" id="NF008956">
    <property type="entry name" value="PRK12299.1"/>
    <property type="match status" value="1"/>
</dbReference>
<dbReference type="PANTHER" id="PTHR11702">
    <property type="entry name" value="DEVELOPMENTALLY REGULATED GTP-BINDING PROTEIN-RELATED"/>
    <property type="match status" value="1"/>
</dbReference>
<dbReference type="PANTHER" id="PTHR11702:SF31">
    <property type="entry name" value="MITOCHONDRIAL RIBOSOME-ASSOCIATED GTPASE 2"/>
    <property type="match status" value="1"/>
</dbReference>
<dbReference type="Pfam" id="PF01018">
    <property type="entry name" value="GTP1_OBG"/>
    <property type="match status" value="1"/>
</dbReference>
<dbReference type="Pfam" id="PF01926">
    <property type="entry name" value="MMR_HSR1"/>
    <property type="match status" value="1"/>
</dbReference>
<dbReference type="PIRSF" id="PIRSF002401">
    <property type="entry name" value="GTP_bd_Obg/CgtA"/>
    <property type="match status" value="1"/>
</dbReference>
<dbReference type="PRINTS" id="PR00326">
    <property type="entry name" value="GTP1OBG"/>
</dbReference>
<dbReference type="SUPFAM" id="SSF82051">
    <property type="entry name" value="Obg GTP-binding protein N-terminal domain"/>
    <property type="match status" value="1"/>
</dbReference>
<dbReference type="SUPFAM" id="SSF52540">
    <property type="entry name" value="P-loop containing nucleoside triphosphate hydrolases"/>
    <property type="match status" value="1"/>
</dbReference>
<dbReference type="PROSITE" id="PS51710">
    <property type="entry name" value="G_OBG"/>
    <property type="match status" value="1"/>
</dbReference>
<dbReference type="PROSITE" id="PS00905">
    <property type="entry name" value="GTP1_OBG"/>
    <property type="match status" value="1"/>
</dbReference>
<dbReference type="PROSITE" id="PS51883">
    <property type="entry name" value="OBG"/>
    <property type="match status" value="1"/>
</dbReference>
<proteinExistence type="inferred from homology"/>
<protein>
    <recommendedName>
        <fullName evidence="1">GTPase Obg</fullName>
        <ecNumber evidence="1">3.6.5.-</ecNumber>
    </recommendedName>
    <alternativeName>
        <fullName evidence="1">GTP-binding protein Obg</fullName>
    </alternativeName>
</protein>
<sequence>MKFVDEATIEVIAGKGGNGVASFRREKFIPRGGPDGGDGGRGGSIFAVADRNINTLIDFRYARLHRAKNGENGRGSDQYGAAAPDITLRVPVGTVVHDADTGEVLFDLNRHGETVTLAAGGQGGMGNIHFKSSVNRAPRQWTPGKEGEQRRLRLELKVLADVGLLGLPNAGKSTLISRISNARPKIADYPFTTLHPNLGVVRTSPSRSFVVADIPGLIEGASEGAGLGHLFLRHLARTRVLLHLVDVSSPDPDADPIESAVENARAIVEELRRYDPELAEKPRWLVLNKLDMVPDPASVQQRFCEAFGWTGPVFCISGLNGEGTQELIWALQDYLDAEKRKEQITQDKADGSYVHEDPRFDTTRDAPPSGKD</sequence>
<evidence type="ECO:0000255" key="1">
    <source>
        <dbReference type="HAMAP-Rule" id="MF_01454"/>
    </source>
</evidence>
<evidence type="ECO:0000255" key="2">
    <source>
        <dbReference type="PROSITE-ProRule" id="PRU01231"/>
    </source>
</evidence>
<evidence type="ECO:0000256" key="3">
    <source>
        <dbReference type="SAM" id="MobiDB-lite"/>
    </source>
</evidence>
<keyword id="KW-0963">Cytoplasm</keyword>
<keyword id="KW-0342">GTP-binding</keyword>
<keyword id="KW-0378">Hydrolase</keyword>
<keyword id="KW-0460">Magnesium</keyword>
<keyword id="KW-0479">Metal-binding</keyword>
<keyword id="KW-0547">Nucleotide-binding</keyword>
<keyword id="KW-1185">Reference proteome</keyword>
<reference key="1">
    <citation type="journal article" date="2006" name="J. Bacteriol.">
        <title>Comparison of the genome sequence of the poultry pathogen Bordetella avium with those of B. bronchiseptica, B. pertussis, and B. parapertussis reveals extensive diversity in surface structures associated with host interaction.</title>
        <authorList>
            <person name="Sebaihia M."/>
            <person name="Preston A."/>
            <person name="Maskell D.J."/>
            <person name="Kuzmiak H."/>
            <person name="Connell T.D."/>
            <person name="King N.D."/>
            <person name="Orndorff P.E."/>
            <person name="Miyamoto D.M."/>
            <person name="Thomson N.R."/>
            <person name="Harris D."/>
            <person name="Goble A."/>
            <person name="Lord A."/>
            <person name="Murphy L."/>
            <person name="Quail M.A."/>
            <person name="Rutter S."/>
            <person name="Squares R."/>
            <person name="Squares S."/>
            <person name="Woodward J."/>
            <person name="Parkhill J."/>
            <person name="Temple L.M."/>
        </authorList>
    </citation>
    <scope>NUCLEOTIDE SEQUENCE [LARGE SCALE GENOMIC DNA]</scope>
    <source>
        <strain>197N</strain>
    </source>
</reference>
<comment type="function">
    <text evidence="1">An essential GTPase which binds GTP, GDP and possibly (p)ppGpp with moderate affinity, with high nucleotide exchange rates and a fairly low GTP hydrolysis rate. Plays a role in control of the cell cycle, stress response, ribosome biogenesis and in those bacteria that undergo differentiation, in morphogenesis control.</text>
</comment>
<comment type="cofactor">
    <cofactor evidence="1">
        <name>Mg(2+)</name>
        <dbReference type="ChEBI" id="CHEBI:18420"/>
    </cofactor>
</comment>
<comment type="subunit">
    <text evidence="1">Monomer.</text>
</comment>
<comment type="subcellular location">
    <subcellularLocation>
        <location evidence="1">Cytoplasm</location>
    </subcellularLocation>
</comment>
<comment type="similarity">
    <text evidence="1">Belongs to the TRAFAC class OBG-HflX-like GTPase superfamily. OBG GTPase family.</text>
</comment>
<organism>
    <name type="scientific">Bordetella avium (strain 197N)</name>
    <dbReference type="NCBI Taxonomy" id="360910"/>
    <lineage>
        <taxon>Bacteria</taxon>
        <taxon>Pseudomonadati</taxon>
        <taxon>Pseudomonadota</taxon>
        <taxon>Betaproteobacteria</taxon>
        <taxon>Burkholderiales</taxon>
        <taxon>Alcaligenaceae</taxon>
        <taxon>Bordetella</taxon>
    </lineage>
</organism>